<sequence length="272" mass="28497">MSTIAESARIHPMAVVEDGAVIGEGVKIGPFCHVGPHVVLHENVELLSHAVVAGRTVIGKGTRIFPMAVIGGDPQSVHHGGEETTLSVGANCTMREGVTMNTGTADFGGQTIVGDNNLFLANSHVAHDCKVGNHVIMSNNVMLAGHVVIEDRVILGGGSAVHQFTRVGRQAFVGGLSAVSYDVIPYGMLNGNPGLLSGLNVVGMTRAGVDRAVIHRVRRAYKSIFEGTGSVRENAAAIRDEYADCEQAVQILDFIAADSDRALSSPTRGQKG</sequence>
<dbReference type="EC" id="2.3.1.129" evidence="1"/>
<dbReference type="EMBL" id="CP001191">
    <property type="protein sequence ID" value="ACI54883.1"/>
    <property type="molecule type" value="Genomic_DNA"/>
</dbReference>
<dbReference type="RefSeq" id="WP_012557554.1">
    <property type="nucleotide sequence ID" value="NC_011369.1"/>
</dbReference>
<dbReference type="SMR" id="B5ZN93"/>
<dbReference type="STRING" id="395492.Rleg2_1593"/>
<dbReference type="KEGG" id="rlt:Rleg2_1593"/>
<dbReference type="eggNOG" id="COG1043">
    <property type="taxonomic scope" value="Bacteria"/>
</dbReference>
<dbReference type="HOGENOM" id="CLU_061249_0_0_5"/>
<dbReference type="UniPathway" id="UPA00359">
    <property type="reaction ID" value="UER00477"/>
</dbReference>
<dbReference type="Proteomes" id="UP000008330">
    <property type="component" value="Chromosome"/>
</dbReference>
<dbReference type="GO" id="GO:0005737">
    <property type="term" value="C:cytoplasm"/>
    <property type="evidence" value="ECO:0007669"/>
    <property type="project" value="UniProtKB-SubCell"/>
</dbReference>
<dbReference type="GO" id="GO:0016020">
    <property type="term" value="C:membrane"/>
    <property type="evidence" value="ECO:0007669"/>
    <property type="project" value="GOC"/>
</dbReference>
<dbReference type="GO" id="GO:0008780">
    <property type="term" value="F:acyl-[acyl-carrier-protein]-UDP-N-acetylglucosamine O-acyltransferase activity"/>
    <property type="evidence" value="ECO:0007669"/>
    <property type="project" value="UniProtKB-UniRule"/>
</dbReference>
<dbReference type="GO" id="GO:0009245">
    <property type="term" value="P:lipid A biosynthetic process"/>
    <property type="evidence" value="ECO:0007669"/>
    <property type="project" value="UniProtKB-UniRule"/>
</dbReference>
<dbReference type="CDD" id="cd03351">
    <property type="entry name" value="LbH_UDP-GlcNAc_AT"/>
    <property type="match status" value="1"/>
</dbReference>
<dbReference type="Gene3D" id="2.160.10.10">
    <property type="entry name" value="Hexapeptide repeat proteins"/>
    <property type="match status" value="1"/>
</dbReference>
<dbReference type="Gene3D" id="1.20.1180.10">
    <property type="entry name" value="Udp N-acetylglucosamine O-acyltransferase, C-terminal domain"/>
    <property type="match status" value="1"/>
</dbReference>
<dbReference type="HAMAP" id="MF_00387">
    <property type="entry name" value="LpxA"/>
    <property type="match status" value="1"/>
</dbReference>
<dbReference type="InterPro" id="IPR029098">
    <property type="entry name" value="Acetyltransf_C"/>
</dbReference>
<dbReference type="InterPro" id="IPR037157">
    <property type="entry name" value="Acetyltransf_C_sf"/>
</dbReference>
<dbReference type="InterPro" id="IPR001451">
    <property type="entry name" value="Hexapep"/>
</dbReference>
<dbReference type="InterPro" id="IPR010137">
    <property type="entry name" value="Lipid_A_LpxA"/>
</dbReference>
<dbReference type="InterPro" id="IPR011004">
    <property type="entry name" value="Trimer_LpxA-like_sf"/>
</dbReference>
<dbReference type="NCBIfam" id="TIGR01852">
    <property type="entry name" value="lipid_A_lpxA"/>
    <property type="match status" value="1"/>
</dbReference>
<dbReference type="NCBIfam" id="NF003657">
    <property type="entry name" value="PRK05289.1"/>
    <property type="match status" value="1"/>
</dbReference>
<dbReference type="PANTHER" id="PTHR43480">
    <property type="entry name" value="ACYL-[ACYL-CARRIER-PROTEIN]--UDP-N-ACETYLGLUCOSAMINE O-ACYLTRANSFERASE"/>
    <property type="match status" value="1"/>
</dbReference>
<dbReference type="PANTHER" id="PTHR43480:SF1">
    <property type="entry name" value="ACYL-[ACYL-CARRIER-PROTEIN]--UDP-N-ACETYLGLUCOSAMINE O-ACYLTRANSFERASE, MITOCHONDRIAL-RELATED"/>
    <property type="match status" value="1"/>
</dbReference>
<dbReference type="Pfam" id="PF13720">
    <property type="entry name" value="Acetyltransf_11"/>
    <property type="match status" value="1"/>
</dbReference>
<dbReference type="Pfam" id="PF00132">
    <property type="entry name" value="Hexapep"/>
    <property type="match status" value="2"/>
</dbReference>
<dbReference type="PIRSF" id="PIRSF000456">
    <property type="entry name" value="UDP-GlcNAc_acltr"/>
    <property type="match status" value="1"/>
</dbReference>
<dbReference type="SUPFAM" id="SSF51161">
    <property type="entry name" value="Trimeric LpxA-like enzymes"/>
    <property type="match status" value="1"/>
</dbReference>
<organism>
    <name type="scientific">Rhizobium leguminosarum bv. trifolii (strain WSM2304)</name>
    <dbReference type="NCBI Taxonomy" id="395492"/>
    <lineage>
        <taxon>Bacteria</taxon>
        <taxon>Pseudomonadati</taxon>
        <taxon>Pseudomonadota</taxon>
        <taxon>Alphaproteobacteria</taxon>
        <taxon>Hyphomicrobiales</taxon>
        <taxon>Rhizobiaceae</taxon>
        <taxon>Rhizobium/Agrobacterium group</taxon>
        <taxon>Rhizobium</taxon>
    </lineage>
</organism>
<keyword id="KW-0012">Acyltransferase</keyword>
<keyword id="KW-0963">Cytoplasm</keyword>
<keyword id="KW-0441">Lipid A biosynthesis</keyword>
<keyword id="KW-0444">Lipid biosynthesis</keyword>
<keyword id="KW-0443">Lipid metabolism</keyword>
<keyword id="KW-1185">Reference proteome</keyword>
<keyword id="KW-0677">Repeat</keyword>
<keyword id="KW-0808">Transferase</keyword>
<gene>
    <name evidence="1" type="primary">lpxA</name>
    <name type="ordered locus">Rleg2_1593</name>
</gene>
<comment type="function">
    <text evidence="1">Involved in the biosynthesis of lipid A, a phosphorylated glycolipid that anchors the lipopolysaccharide to the outer membrane of the cell.</text>
</comment>
<comment type="catalytic activity">
    <reaction evidence="1">
        <text>a (3R)-hydroxyacyl-[ACP] + UDP-N-acetyl-alpha-D-glucosamine = a UDP-3-O-[(3R)-3-hydroxyacyl]-N-acetyl-alpha-D-glucosamine + holo-[ACP]</text>
        <dbReference type="Rhea" id="RHEA:67812"/>
        <dbReference type="Rhea" id="RHEA-COMP:9685"/>
        <dbReference type="Rhea" id="RHEA-COMP:9945"/>
        <dbReference type="ChEBI" id="CHEBI:57705"/>
        <dbReference type="ChEBI" id="CHEBI:64479"/>
        <dbReference type="ChEBI" id="CHEBI:78827"/>
        <dbReference type="ChEBI" id="CHEBI:173225"/>
        <dbReference type="EC" id="2.3.1.129"/>
    </reaction>
</comment>
<comment type="pathway">
    <text evidence="1">Glycolipid biosynthesis; lipid IV(A) biosynthesis; lipid IV(A) from (3R)-3-hydroxytetradecanoyl-[acyl-carrier-protein] and UDP-N-acetyl-alpha-D-glucosamine: step 1/6.</text>
</comment>
<comment type="subunit">
    <text evidence="1">Homotrimer.</text>
</comment>
<comment type="subcellular location">
    <subcellularLocation>
        <location evidence="1">Cytoplasm</location>
    </subcellularLocation>
</comment>
<comment type="similarity">
    <text evidence="1">Belongs to the transferase hexapeptide repeat family. LpxA subfamily.</text>
</comment>
<feature type="chain" id="PRO_1000122724" description="Acyl-[acyl-carrier-protein]--UDP-N-acetylglucosamine O-acyltransferase">
    <location>
        <begin position="1"/>
        <end position="272"/>
    </location>
</feature>
<reference key="1">
    <citation type="journal article" date="2010" name="Stand. Genomic Sci.">
        <title>Complete genome sequence of Rhizobium leguminosarum bv trifolii strain WSM2304, an effective microsymbiont of the South American clover Trifolium polymorphum.</title>
        <authorList>
            <person name="Reeve W."/>
            <person name="O'Hara G."/>
            <person name="Chain P."/>
            <person name="Ardley J."/>
            <person name="Brau L."/>
            <person name="Nandesena K."/>
            <person name="Tiwari R."/>
            <person name="Malfatti S."/>
            <person name="Kiss H."/>
            <person name="Lapidus A."/>
            <person name="Copeland A."/>
            <person name="Nolan M."/>
            <person name="Land M."/>
            <person name="Ivanova N."/>
            <person name="Mavromatis K."/>
            <person name="Markowitz V."/>
            <person name="Kyrpides N."/>
            <person name="Melino V."/>
            <person name="Denton M."/>
            <person name="Yates R."/>
            <person name="Howieson J."/>
        </authorList>
    </citation>
    <scope>NUCLEOTIDE SEQUENCE [LARGE SCALE GENOMIC DNA]</scope>
    <source>
        <strain>WSM2304</strain>
    </source>
</reference>
<proteinExistence type="inferred from homology"/>
<protein>
    <recommendedName>
        <fullName evidence="1">Acyl-[acyl-carrier-protein]--UDP-N-acetylglucosamine O-acyltransferase</fullName>
        <shortName evidence="1">UDP-N-acetylglucosamine acyltransferase</shortName>
        <ecNumber evidence="1">2.3.1.129</ecNumber>
    </recommendedName>
</protein>
<name>LPXA_RHILW</name>
<accession>B5ZN93</accession>
<evidence type="ECO:0000255" key="1">
    <source>
        <dbReference type="HAMAP-Rule" id="MF_00387"/>
    </source>
</evidence>